<feature type="chain" id="PRO_1000196811" description="Formate--tetrahydrofolate ligase">
    <location>
        <begin position="1"/>
        <end position="553"/>
    </location>
</feature>
<feature type="binding site" evidence="1">
    <location>
        <begin position="63"/>
        <end position="70"/>
    </location>
    <ligand>
        <name>ATP</name>
        <dbReference type="ChEBI" id="CHEBI:30616"/>
    </ligand>
</feature>
<reference key="1">
    <citation type="journal article" date="2008" name="DNA Res.">
        <title>Comparative genome analysis of Lactobacillus reuteri and Lactobacillus fermentum reveal a genomic island for reuterin and cobalamin production.</title>
        <authorList>
            <person name="Morita H."/>
            <person name="Toh H."/>
            <person name="Fukuda S."/>
            <person name="Horikawa H."/>
            <person name="Oshima K."/>
            <person name="Suzuki T."/>
            <person name="Murakami M."/>
            <person name="Hisamatsu S."/>
            <person name="Kato Y."/>
            <person name="Takizawa T."/>
            <person name="Fukuoka H."/>
            <person name="Yoshimura T."/>
            <person name="Itoh K."/>
            <person name="O'Sullivan D.J."/>
            <person name="McKay L.L."/>
            <person name="Ohno H."/>
            <person name="Kikuchi J."/>
            <person name="Masaoka T."/>
            <person name="Hattori M."/>
        </authorList>
    </citation>
    <scope>NUCLEOTIDE SEQUENCE [LARGE SCALE GENOMIC DNA]</scope>
    <source>
        <strain>NBRC 3956 / LMG 18251</strain>
    </source>
</reference>
<gene>
    <name evidence="1" type="primary">fhs</name>
    <name type="ordered locus">LAF_0117</name>
</gene>
<organism>
    <name type="scientific">Limosilactobacillus fermentum (strain NBRC 3956 / LMG 18251)</name>
    <name type="common">Lactobacillus fermentum</name>
    <dbReference type="NCBI Taxonomy" id="334390"/>
    <lineage>
        <taxon>Bacteria</taxon>
        <taxon>Bacillati</taxon>
        <taxon>Bacillota</taxon>
        <taxon>Bacilli</taxon>
        <taxon>Lactobacillales</taxon>
        <taxon>Lactobacillaceae</taxon>
        <taxon>Limosilactobacillus</taxon>
    </lineage>
</organism>
<sequence length="553" mass="59287">MLTDIEIADQAQLTPINEIAAQLGLDEDAIEQYGKYKAKINLPVQATPEKKHKLVLVTSINPTPAGEGKSTVLVGLGDALSLLHHQTVIAMREPSMGPVFGMKGGATGGGYSQVVPMEDINLHFTGDFHALTSANNTLAALIDNYLMRGNELGLDPRRVIWKRVEDVNDRALRDVVTGLGGIMQGVPRQTGFDITPASELMAILCLATDLSDLKARVSRIVVGYTYDKEPVTVGQLGFEEAVTILLKDAIKPNLVQTLGHTPAIVHGGPFANIAHGCNSVLATKTALQLADYTVTEAGFGADLGAEKFLDIKRPVLGKTPDAVVIVATVRALEYNGGASLQALKDENLTELENGLQNLNRHIANMQRYGLPLVVAINHFATDTPAEIKLIEDNCKARGVNVVVADAWAKGGAGTLDLAKEVVALAEQEASFTPLYDYQATPKEKVETIATKVYGAGRVAFSKKALNQLKQFEKLGWNDLPICIAKTQYSFTDDQTQLGAPEGFTFHIREFVPKLGAGFIVALAGNMLTMPGLPKVPAAVKMTIDSEGKITGLF</sequence>
<name>FTHS_LIMF3</name>
<keyword id="KW-0067">ATP-binding</keyword>
<keyword id="KW-0436">Ligase</keyword>
<keyword id="KW-0547">Nucleotide-binding</keyword>
<keyword id="KW-0554">One-carbon metabolism</keyword>
<keyword id="KW-1185">Reference proteome</keyword>
<comment type="catalytic activity">
    <reaction evidence="1">
        <text>(6S)-5,6,7,8-tetrahydrofolate + formate + ATP = (6R)-10-formyltetrahydrofolate + ADP + phosphate</text>
        <dbReference type="Rhea" id="RHEA:20221"/>
        <dbReference type="ChEBI" id="CHEBI:15740"/>
        <dbReference type="ChEBI" id="CHEBI:30616"/>
        <dbReference type="ChEBI" id="CHEBI:43474"/>
        <dbReference type="ChEBI" id="CHEBI:57453"/>
        <dbReference type="ChEBI" id="CHEBI:195366"/>
        <dbReference type="ChEBI" id="CHEBI:456216"/>
        <dbReference type="EC" id="6.3.4.3"/>
    </reaction>
</comment>
<comment type="pathway">
    <text evidence="1">One-carbon metabolism; tetrahydrofolate interconversion.</text>
</comment>
<comment type="similarity">
    <text evidence="1">Belongs to the formate--tetrahydrofolate ligase family.</text>
</comment>
<proteinExistence type="inferred from homology"/>
<accession>B2GF64</accession>
<evidence type="ECO:0000255" key="1">
    <source>
        <dbReference type="HAMAP-Rule" id="MF_01543"/>
    </source>
</evidence>
<protein>
    <recommendedName>
        <fullName evidence="1">Formate--tetrahydrofolate ligase</fullName>
        <ecNumber evidence="1">6.3.4.3</ecNumber>
    </recommendedName>
    <alternativeName>
        <fullName evidence="1">Formyltetrahydrofolate synthetase</fullName>
        <shortName evidence="1">FHS</shortName>
        <shortName evidence="1">FTHFS</shortName>
    </alternativeName>
</protein>
<dbReference type="EC" id="6.3.4.3" evidence="1"/>
<dbReference type="EMBL" id="AP008937">
    <property type="protein sequence ID" value="BAG26453.1"/>
    <property type="molecule type" value="Genomic_DNA"/>
</dbReference>
<dbReference type="RefSeq" id="WP_012390743.1">
    <property type="nucleotide sequence ID" value="NC_010610.1"/>
</dbReference>
<dbReference type="SMR" id="B2GF64"/>
<dbReference type="KEGG" id="lfe:LAF_0117"/>
<dbReference type="PATRIC" id="fig|334390.5.peg.122"/>
<dbReference type="eggNOG" id="COG2759">
    <property type="taxonomic scope" value="Bacteria"/>
</dbReference>
<dbReference type="HOGENOM" id="CLU_003601_3_3_9"/>
<dbReference type="UniPathway" id="UPA00193"/>
<dbReference type="Proteomes" id="UP000001697">
    <property type="component" value="Chromosome"/>
</dbReference>
<dbReference type="GO" id="GO:0005524">
    <property type="term" value="F:ATP binding"/>
    <property type="evidence" value="ECO:0007669"/>
    <property type="project" value="UniProtKB-UniRule"/>
</dbReference>
<dbReference type="GO" id="GO:0004329">
    <property type="term" value="F:formate-tetrahydrofolate ligase activity"/>
    <property type="evidence" value="ECO:0007669"/>
    <property type="project" value="UniProtKB-UniRule"/>
</dbReference>
<dbReference type="GO" id="GO:0035999">
    <property type="term" value="P:tetrahydrofolate interconversion"/>
    <property type="evidence" value="ECO:0007669"/>
    <property type="project" value="UniProtKB-UniRule"/>
</dbReference>
<dbReference type="CDD" id="cd00477">
    <property type="entry name" value="FTHFS"/>
    <property type="match status" value="1"/>
</dbReference>
<dbReference type="FunFam" id="3.30.1510.10:FF:000001">
    <property type="entry name" value="Formate--tetrahydrofolate ligase"/>
    <property type="match status" value="1"/>
</dbReference>
<dbReference type="FunFam" id="3.10.410.10:FF:000001">
    <property type="entry name" value="Putative formate--tetrahydrofolate ligase"/>
    <property type="match status" value="1"/>
</dbReference>
<dbReference type="Gene3D" id="3.30.1510.10">
    <property type="entry name" value="Domain 2, N(10)-formyltetrahydrofolate synthetase"/>
    <property type="match status" value="1"/>
</dbReference>
<dbReference type="Gene3D" id="3.10.410.10">
    <property type="entry name" value="Formyltetrahydrofolate synthetase, domain 3"/>
    <property type="match status" value="1"/>
</dbReference>
<dbReference type="Gene3D" id="3.40.50.300">
    <property type="entry name" value="P-loop containing nucleotide triphosphate hydrolases"/>
    <property type="match status" value="1"/>
</dbReference>
<dbReference type="HAMAP" id="MF_01543">
    <property type="entry name" value="FTHFS"/>
    <property type="match status" value="1"/>
</dbReference>
<dbReference type="InterPro" id="IPR000559">
    <property type="entry name" value="Formate_THF_ligase"/>
</dbReference>
<dbReference type="InterPro" id="IPR020628">
    <property type="entry name" value="Formate_THF_ligase_CS"/>
</dbReference>
<dbReference type="InterPro" id="IPR027417">
    <property type="entry name" value="P-loop_NTPase"/>
</dbReference>
<dbReference type="NCBIfam" id="NF010030">
    <property type="entry name" value="PRK13505.1"/>
    <property type="match status" value="1"/>
</dbReference>
<dbReference type="Pfam" id="PF01268">
    <property type="entry name" value="FTHFS"/>
    <property type="match status" value="1"/>
</dbReference>
<dbReference type="SUPFAM" id="SSF52540">
    <property type="entry name" value="P-loop containing nucleoside triphosphate hydrolases"/>
    <property type="match status" value="1"/>
</dbReference>
<dbReference type="PROSITE" id="PS00721">
    <property type="entry name" value="FTHFS_1"/>
    <property type="match status" value="1"/>
</dbReference>
<dbReference type="PROSITE" id="PS00722">
    <property type="entry name" value="FTHFS_2"/>
    <property type="match status" value="1"/>
</dbReference>